<protein>
    <recommendedName>
        <fullName evidence="1">ATP synthase subunit b</fullName>
    </recommendedName>
    <alternativeName>
        <fullName evidence="1">ATP synthase F(0) sector subunit b</fullName>
    </alternativeName>
    <alternativeName>
        <fullName evidence="1">ATPase subunit I</fullName>
    </alternativeName>
    <alternativeName>
        <fullName evidence="1">F-type ATPase subunit b</fullName>
        <shortName evidence="1">F-ATPase subunit b</shortName>
    </alternativeName>
</protein>
<accession>B7HFK6</accession>
<proteinExistence type="inferred from homology"/>
<keyword id="KW-0066">ATP synthesis</keyword>
<keyword id="KW-1003">Cell membrane</keyword>
<keyword id="KW-0138">CF(0)</keyword>
<keyword id="KW-0375">Hydrogen ion transport</keyword>
<keyword id="KW-0406">Ion transport</keyword>
<keyword id="KW-0472">Membrane</keyword>
<keyword id="KW-0812">Transmembrane</keyword>
<keyword id="KW-1133">Transmembrane helix</keyword>
<keyword id="KW-0813">Transport</keyword>
<gene>
    <name evidence="1" type="primary">atpF</name>
    <name type="ordered locus">BCB4264_A5431</name>
</gene>
<name>ATPF_BACC4</name>
<organism>
    <name type="scientific">Bacillus cereus (strain B4264)</name>
    <dbReference type="NCBI Taxonomy" id="405532"/>
    <lineage>
        <taxon>Bacteria</taxon>
        <taxon>Bacillati</taxon>
        <taxon>Bacillota</taxon>
        <taxon>Bacilli</taxon>
        <taxon>Bacillales</taxon>
        <taxon>Bacillaceae</taxon>
        <taxon>Bacillus</taxon>
        <taxon>Bacillus cereus group</taxon>
    </lineage>
</organism>
<sequence length="168" mass="18973">MPTLLLGASIPFGTIAYTLFIFLLLLVMLRKFAWGPLMGIMKEREEHVANEIDAAERNNAEAKKLVEEQREMLKQSRVEAQELIERAKKQAVDQKDVIVAAAKEEAESIKASAVQEIQREKEQAIAALQEQVASLSVQIASKVIEKELKEEDQVKLIRDYIKEVGEAR</sequence>
<feature type="chain" id="PRO_0000368327" description="ATP synthase subunit b">
    <location>
        <begin position="1"/>
        <end position="168"/>
    </location>
</feature>
<feature type="transmembrane region" description="Helical" evidence="1">
    <location>
        <begin position="9"/>
        <end position="29"/>
    </location>
</feature>
<comment type="function">
    <text evidence="1">F(1)F(0) ATP synthase produces ATP from ADP in the presence of a proton or sodium gradient. F-type ATPases consist of two structural domains, F(1) containing the extramembraneous catalytic core and F(0) containing the membrane proton channel, linked together by a central stalk and a peripheral stalk. During catalysis, ATP synthesis in the catalytic domain of F(1) is coupled via a rotary mechanism of the central stalk subunits to proton translocation.</text>
</comment>
<comment type="function">
    <text evidence="1">Component of the F(0) channel, it forms part of the peripheral stalk, linking F(1) to F(0).</text>
</comment>
<comment type="subunit">
    <text evidence="1">F-type ATPases have 2 components, F(1) - the catalytic core - and F(0) - the membrane proton channel. F(1) has five subunits: alpha(3), beta(3), gamma(1), delta(1), epsilon(1). F(0) has three main subunits: a(1), b(2) and c(10-14). The alpha and beta chains form an alternating ring which encloses part of the gamma chain. F(1) is attached to F(0) by a central stalk formed by the gamma and epsilon chains, while a peripheral stalk is formed by the delta and b chains.</text>
</comment>
<comment type="subcellular location">
    <subcellularLocation>
        <location evidence="1">Cell membrane</location>
        <topology evidence="1">Single-pass membrane protein</topology>
    </subcellularLocation>
</comment>
<comment type="similarity">
    <text evidence="1">Belongs to the ATPase B chain family.</text>
</comment>
<dbReference type="EMBL" id="CP001176">
    <property type="protein sequence ID" value="ACK63590.1"/>
    <property type="molecule type" value="Genomic_DNA"/>
</dbReference>
<dbReference type="RefSeq" id="WP_001142624.1">
    <property type="nucleotide sequence ID" value="NZ_VEHB01000004.1"/>
</dbReference>
<dbReference type="SMR" id="B7HFK6"/>
<dbReference type="KEGG" id="bcb:BCB4264_A5431"/>
<dbReference type="HOGENOM" id="CLU_079215_4_2_9"/>
<dbReference type="Proteomes" id="UP000007096">
    <property type="component" value="Chromosome"/>
</dbReference>
<dbReference type="GO" id="GO:0005886">
    <property type="term" value="C:plasma membrane"/>
    <property type="evidence" value="ECO:0007669"/>
    <property type="project" value="UniProtKB-SubCell"/>
</dbReference>
<dbReference type="GO" id="GO:0045259">
    <property type="term" value="C:proton-transporting ATP synthase complex"/>
    <property type="evidence" value="ECO:0007669"/>
    <property type="project" value="UniProtKB-KW"/>
</dbReference>
<dbReference type="GO" id="GO:0046933">
    <property type="term" value="F:proton-transporting ATP synthase activity, rotational mechanism"/>
    <property type="evidence" value="ECO:0007669"/>
    <property type="project" value="UniProtKB-UniRule"/>
</dbReference>
<dbReference type="GO" id="GO:0046961">
    <property type="term" value="F:proton-transporting ATPase activity, rotational mechanism"/>
    <property type="evidence" value="ECO:0007669"/>
    <property type="project" value="TreeGrafter"/>
</dbReference>
<dbReference type="CDD" id="cd06503">
    <property type="entry name" value="ATP-synt_Fo_b"/>
    <property type="match status" value="1"/>
</dbReference>
<dbReference type="Gene3D" id="6.10.250.1580">
    <property type="match status" value="1"/>
</dbReference>
<dbReference type="HAMAP" id="MF_01398">
    <property type="entry name" value="ATP_synth_b_bprime"/>
    <property type="match status" value="1"/>
</dbReference>
<dbReference type="InterPro" id="IPR028987">
    <property type="entry name" value="ATP_synth_B-like_membr_sf"/>
</dbReference>
<dbReference type="InterPro" id="IPR002146">
    <property type="entry name" value="ATP_synth_b/b'su_bac/chlpt"/>
</dbReference>
<dbReference type="InterPro" id="IPR005864">
    <property type="entry name" value="ATP_synth_F0_bsu_bac"/>
</dbReference>
<dbReference type="InterPro" id="IPR050059">
    <property type="entry name" value="ATP_synthase_B_chain"/>
</dbReference>
<dbReference type="NCBIfam" id="TIGR01144">
    <property type="entry name" value="ATP_synt_b"/>
    <property type="match status" value="1"/>
</dbReference>
<dbReference type="PANTHER" id="PTHR33445:SF1">
    <property type="entry name" value="ATP SYNTHASE SUBUNIT B"/>
    <property type="match status" value="1"/>
</dbReference>
<dbReference type="PANTHER" id="PTHR33445">
    <property type="entry name" value="ATP SYNTHASE SUBUNIT B', CHLOROPLASTIC"/>
    <property type="match status" value="1"/>
</dbReference>
<dbReference type="Pfam" id="PF00430">
    <property type="entry name" value="ATP-synt_B"/>
    <property type="match status" value="1"/>
</dbReference>
<dbReference type="SUPFAM" id="SSF81573">
    <property type="entry name" value="F1F0 ATP synthase subunit B, membrane domain"/>
    <property type="match status" value="1"/>
</dbReference>
<evidence type="ECO:0000255" key="1">
    <source>
        <dbReference type="HAMAP-Rule" id="MF_01398"/>
    </source>
</evidence>
<reference key="1">
    <citation type="submission" date="2008-10" db="EMBL/GenBank/DDBJ databases">
        <title>Genome sequence of Bacillus cereus B4264.</title>
        <authorList>
            <person name="Dodson R.J."/>
            <person name="Durkin A.S."/>
            <person name="Rosovitz M.J."/>
            <person name="Rasko D.A."/>
            <person name="Hoffmaster A."/>
            <person name="Ravel J."/>
            <person name="Sutton G."/>
        </authorList>
    </citation>
    <scope>NUCLEOTIDE SEQUENCE [LARGE SCALE GENOMIC DNA]</scope>
    <source>
        <strain>B4264</strain>
    </source>
</reference>